<comment type="subcellular location">
    <subcellularLocation>
        <location evidence="1">Cell membrane</location>
        <topology evidence="1">Multi-pass membrane protein</topology>
    </subcellularLocation>
</comment>
<comment type="similarity">
    <text evidence="1">Belongs to the UPF0391 family.</text>
</comment>
<proteinExistence type="inferred from homology"/>
<organism>
    <name type="scientific">Rhizobium meliloti (strain 1021)</name>
    <name type="common">Ensifer meliloti</name>
    <name type="synonym">Sinorhizobium meliloti</name>
    <dbReference type="NCBI Taxonomy" id="266834"/>
    <lineage>
        <taxon>Bacteria</taxon>
        <taxon>Pseudomonadati</taxon>
        <taxon>Pseudomonadota</taxon>
        <taxon>Alphaproteobacteria</taxon>
        <taxon>Hyphomicrobiales</taxon>
        <taxon>Rhizobiaceae</taxon>
        <taxon>Sinorhizobium/Ensifer group</taxon>
        <taxon>Sinorhizobium</taxon>
    </lineage>
</organism>
<reference key="1">
    <citation type="journal article" date="2001" name="Proc. Natl. Acad. Sci. U.S.A.">
        <title>Analysis of the chromosome sequence of the legume symbiont Sinorhizobium meliloti strain 1021.</title>
        <authorList>
            <person name="Capela D."/>
            <person name="Barloy-Hubler F."/>
            <person name="Gouzy J."/>
            <person name="Bothe G."/>
            <person name="Ampe F."/>
            <person name="Batut J."/>
            <person name="Boistard P."/>
            <person name="Becker A."/>
            <person name="Boutry M."/>
            <person name="Cadieu E."/>
            <person name="Dreano S."/>
            <person name="Gloux S."/>
            <person name="Godrie T."/>
            <person name="Goffeau A."/>
            <person name="Kahn D."/>
            <person name="Kiss E."/>
            <person name="Lelaure V."/>
            <person name="Masuy D."/>
            <person name="Pohl T."/>
            <person name="Portetelle D."/>
            <person name="Puehler A."/>
            <person name="Purnelle B."/>
            <person name="Ramsperger U."/>
            <person name="Renard C."/>
            <person name="Thebault P."/>
            <person name="Vandenbol M."/>
            <person name="Weidner S."/>
            <person name="Galibert F."/>
        </authorList>
    </citation>
    <scope>NUCLEOTIDE SEQUENCE [LARGE SCALE GENOMIC DNA]</scope>
    <source>
        <strain>1021</strain>
    </source>
</reference>
<reference key="2">
    <citation type="journal article" date="2001" name="Science">
        <title>The composite genome of the legume symbiont Sinorhizobium meliloti.</title>
        <authorList>
            <person name="Galibert F."/>
            <person name="Finan T.M."/>
            <person name="Long S.R."/>
            <person name="Puehler A."/>
            <person name="Abola P."/>
            <person name="Ampe F."/>
            <person name="Barloy-Hubler F."/>
            <person name="Barnett M.J."/>
            <person name="Becker A."/>
            <person name="Boistard P."/>
            <person name="Bothe G."/>
            <person name="Boutry M."/>
            <person name="Bowser L."/>
            <person name="Buhrmester J."/>
            <person name="Cadieu E."/>
            <person name="Capela D."/>
            <person name="Chain P."/>
            <person name="Cowie A."/>
            <person name="Davis R.W."/>
            <person name="Dreano S."/>
            <person name="Federspiel N.A."/>
            <person name="Fisher R.F."/>
            <person name="Gloux S."/>
            <person name="Godrie T."/>
            <person name="Goffeau A."/>
            <person name="Golding B."/>
            <person name="Gouzy J."/>
            <person name="Gurjal M."/>
            <person name="Hernandez-Lucas I."/>
            <person name="Hong A."/>
            <person name="Huizar L."/>
            <person name="Hyman R.W."/>
            <person name="Jones T."/>
            <person name="Kahn D."/>
            <person name="Kahn M.L."/>
            <person name="Kalman S."/>
            <person name="Keating D.H."/>
            <person name="Kiss E."/>
            <person name="Komp C."/>
            <person name="Lelaure V."/>
            <person name="Masuy D."/>
            <person name="Palm C."/>
            <person name="Peck M.C."/>
            <person name="Pohl T.M."/>
            <person name="Portetelle D."/>
            <person name="Purnelle B."/>
            <person name="Ramsperger U."/>
            <person name="Surzycki R."/>
            <person name="Thebault P."/>
            <person name="Vandenbol M."/>
            <person name="Vorhoelter F.J."/>
            <person name="Weidner S."/>
            <person name="Wells D.H."/>
            <person name="Wong K."/>
            <person name="Yeh K.-C."/>
            <person name="Batut J."/>
        </authorList>
    </citation>
    <scope>NUCLEOTIDE SEQUENCE [LARGE SCALE GENOMIC DNA]</scope>
    <source>
        <strain>1021</strain>
    </source>
</reference>
<gene>
    <name type="ordered locus">R00741</name>
    <name type="ORF">SMc00796</name>
</gene>
<feature type="chain" id="PRO_0000256773" description="UPF0391 membrane protein R00741">
    <location>
        <begin position="1"/>
        <end position="54"/>
    </location>
</feature>
<feature type="transmembrane region" description="Helical" evidence="1">
    <location>
        <begin position="5"/>
        <end position="25"/>
    </location>
</feature>
<feature type="transmembrane region" description="Helical" evidence="1">
    <location>
        <begin position="30"/>
        <end position="50"/>
    </location>
</feature>
<keyword id="KW-1003">Cell membrane</keyword>
<keyword id="KW-0472">Membrane</keyword>
<keyword id="KW-1185">Reference proteome</keyword>
<keyword id="KW-0812">Transmembrane</keyword>
<keyword id="KW-1133">Transmembrane helix</keyword>
<dbReference type="EMBL" id="AL591688">
    <property type="protein sequence ID" value="CAC45313.1"/>
    <property type="molecule type" value="Genomic_DNA"/>
</dbReference>
<dbReference type="RefSeq" id="NP_384847.1">
    <property type="nucleotide sequence ID" value="NC_003047.1"/>
</dbReference>
<dbReference type="RefSeq" id="WP_003527150.1">
    <property type="nucleotide sequence ID" value="NC_003047.1"/>
</dbReference>
<dbReference type="EnsemblBacteria" id="CAC45313">
    <property type="protein sequence ID" value="CAC45313"/>
    <property type="gene ID" value="SMc00796"/>
</dbReference>
<dbReference type="KEGG" id="sme:SMc00796"/>
<dbReference type="PATRIC" id="fig|266834.11.peg.2123"/>
<dbReference type="eggNOG" id="COG5487">
    <property type="taxonomic scope" value="Bacteria"/>
</dbReference>
<dbReference type="HOGENOM" id="CLU_187346_0_0_5"/>
<dbReference type="Proteomes" id="UP000001976">
    <property type="component" value="Chromosome"/>
</dbReference>
<dbReference type="GO" id="GO:0005886">
    <property type="term" value="C:plasma membrane"/>
    <property type="evidence" value="ECO:0007669"/>
    <property type="project" value="UniProtKB-SubCell"/>
</dbReference>
<dbReference type="HAMAP" id="MF_01361">
    <property type="entry name" value="UPF0391"/>
    <property type="match status" value="1"/>
</dbReference>
<dbReference type="InterPro" id="IPR009760">
    <property type="entry name" value="DUF1328"/>
</dbReference>
<dbReference type="NCBIfam" id="NF010226">
    <property type="entry name" value="PRK13682.1-1"/>
    <property type="match status" value="1"/>
</dbReference>
<dbReference type="NCBIfam" id="NF010228">
    <property type="entry name" value="PRK13682.1-3"/>
    <property type="match status" value="1"/>
</dbReference>
<dbReference type="NCBIfam" id="NF010229">
    <property type="entry name" value="PRK13682.1-4"/>
    <property type="match status" value="1"/>
</dbReference>
<dbReference type="Pfam" id="PF07043">
    <property type="entry name" value="DUF1328"/>
    <property type="match status" value="1"/>
</dbReference>
<dbReference type="PIRSF" id="PIRSF036466">
    <property type="entry name" value="UCP036466"/>
    <property type="match status" value="1"/>
</dbReference>
<sequence>MLYYALVFLIVAIIAGVLGFGGIAGASAGIAQVLFFLFLIFLVISLVAGLIRRT</sequence>
<protein>
    <recommendedName>
        <fullName evidence="1">UPF0391 membrane protein R00741</fullName>
    </recommendedName>
</protein>
<evidence type="ECO:0000255" key="1">
    <source>
        <dbReference type="HAMAP-Rule" id="MF_01361"/>
    </source>
</evidence>
<accession>Q92RV0</accession>
<name>Y741_RHIME</name>